<evidence type="ECO:0000255" key="1">
    <source>
        <dbReference type="HAMAP-Rule" id="MF_00203"/>
    </source>
</evidence>
<dbReference type="EMBL" id="CP000924">
    <property type="protein sequence ID" value="ABY94238.1"/>
    <property type="molecule type" value="Genomic_DNA"/>
</dbReference>
<dbReference type="RefSeq" id="WP_012269068.1">
    <property type="nucleotide sequence ID" value="NC_010321.1"/>
</dbReference>
<dbReference type="SMR" id="B0K791"/>
<dbReference type="STRING" id="340099.Teth39_0574"/>
<dbReference type="KEGG" id="tpd:Teth39_0574"/>
<dbReference type="eggNOG" id="COG0322">
    <property type="taxonomic scope" value="Bacteria"/>
</dbReference>
<dbReference type="HOGENOM" id="CLU_014841_3_2_9"/>
<dbReference type="Proteomes" id="UP000002156">
    <property type="component" value="Chromosome"/>
</dbReference>
<dbReference type="GO" id="GO:0005737">
    <property type="term" value="C:cytoplasm"/>
    <property type="evidence" value="ECO:0007669"/>
    <property type="project" value="UniProtKB-SubCell"/>
</dbReference>
<dbReference type="GO" id="GO:0009380">
    <property type="term" value="C:excinuclease repair complex"/>
    <property type="evidence" value="ECO:0007669"/>
    <property type="project" value="InterPro"/>
</dbReference>
<dbReference type="GO" id="GO:0003677">
    <property type="term" value="F:DNA binding"/>
    <property type="evidence" value="ECO:0007669"/>
    <property type="project" value="UniProtKB-UniRule"/>
</dbReference>
<dbReference type="GO" id="GO:0009381">
    <property type="term" value="F:excinuclease ABC activity"/>
    <property type="evidence" value="ECO:0007669"/>
    <property type="project" value="UniProtKB-UniRule"/>
</dbReference>
<dbReference type="GO" id="GO:0006289">
    <property type="term" value="P:nucleotide-excision repair"/>
    <property type="evidence" value="ECO:0007669"/>
    <property type="project" value="UniProtKB-UniRule"/>
</dbReference>
<dbReference type="GO" id="GO:0009432">
    <property type="term" value="P:SOS response"/>
    <property type="evidence" value="ECO:0007669"/>
    <property type="project" value="UniProtKB-UniRule"/>
</dbReference>
<dbReference type="CDD" id="cd10434">
    <property type="entry name" value="GIY-YIG_UvrC_Cho"/>
    <property type="match status" value="1"/>
</dbReference>
<dbReference type="FunFam" id="3.40.1440.10:FF:000001">
    <property type="entry name" value="UvrABC system protein C"/>
    <property type="match status" value="1"/>
</dbReference>
<dbReference type="Gene3D" id="1.10.150.20">
    <property type="entry name" value="5' to 3' exonuclease, C-terminal subdomain"/>
    <property type="match status" value="1"/>
</dbReference>
<dbReference type="Gene3D" id="3.40.1440.10">
    <property type="entry name" value="GIY-YIG endonuclease"/>
    <property type="match status" value="1"/>
</dbReference>
<dbReference type="Gene3D" id="4.10.860.10">
    <property type="entry name" value="UVR domain"/>
    <property type="match status" value="1"/>
</dbReference>
<dbReference type="Gene3D" id="3.30.420.340">
    <property type="entry name" value="UvrC, RNAse H endonuclease domain"/>
    <property type="match status" value="1"/>
</dbReference>
<dbReference type="HAMAP" id="MF_00203">
    <property type="entry name" value="UvrC"/>
    <property type="match status" value="1"/>
</dbReference>
<dbReference type="InterPro" id="IPR000305">
    <property type="entry name" value="GIY-YIG_endonuc"/>
</dbReference>
<dbReference type="InterPro" id="IPR035901">
    <property type="entry name" value="GIY-YIG_endonuc_sf"/>
</dbReference>
<dbReference type="InterPro" id="IPR047296">
    <property type="entry name" value="GIY-YIG_UvrC_Cho"/>
</dbReference>
<dbReference type="InterPro" id="IPR003583">
    <property type="entry name" value="Hlx-hairpin-Hlx_DNA-bd_motif"/>
</dbReference>
<dbReference type="InterPro" id="IPR010994">
    <property type="entry name" value="RuvA_2-like"/>
</dbReference>
<dbReference type="InterPro" id="IPR001943">
    <property type="entry name" value="UVR_dom"/>
</dbReference>
<dbReference type="InterPro" id="IPR036876">
    <property type="entry name" value="UVR_dom_sf"/>
</dbReference>
<dbReference type="InterPro" id="IPR050066">
    <property type="entry name" value="UvrABC_protein_C"/>
</dbReference>
<dbReference type="InterPro" id="IPR004791">
    <property type="entry name" value="UvrC"/>
</dbReference>
<dbReference type="InterPro" id="IPR001162">
    <property type="entry name" value="UvrC_RNase_H_dom"/>
</dbReference>
<dbReference type="InterPro" id="IPR038476">
    <property type="entry name" value="UvrC_RNase_H_dom_sf"/>
</dbReference>
<dbReference type="NCBIfam" id="NF001824">
    <property type="entry name" value="PRK00558.1-5"/>
    <property type="match status" value="1"/>
</dbReference>
<dbReference type="NCBIfam" id="TIGR00194">
    <property type="entry name" value="uvrC"/>
    <property type="match status" value="1"/>
</dbReference>
<dbReference type="PANTHER" id="PTHR30562:SF1">
    <property type="entry name" value="UVRABC SYSTEM PROTEIN C"/>
    <property type="match status" value="1"/>
</dbReference>
<dbReference type="PANTHER" id="PTHR30562">
    <property type="entry name" value="UVRC/OXIDOREDUCTASE"/>
    <property type="match status" value="1"/>
</dbReference>
<dbReference type="Pfam" id="PF01541">
    <property type="entry name" value="GIY-YIG"/>
    <property type="match status" value="1"/>
</dbReference>
<dbReference type="Pfam" id="PF14520">
    <property type="entry name" value="HHH_5"/>
    <property type="match status" value="1"/>
</dbReference>
<dbReference type="Pfam" id="PF02151">
    <property type="entry name" value="UVR"/>
    <property type="match status" value="1"/>
</dbReference>
<dbReference type="Pfam" id="PF22920">
    <property type="entry name" value="UvrC_RNaseH"/>
    <property type="match status" value="1"/>
</dbReference>
<dbReference type="Pfam" id="PF08459">
    <property type="entry name" value="UvrC_RNaseH_dom"/>
    <property type="match status" value="1"/>
</dbReference>
<dbReference type="SMART" id="SM00465">
    <property type="entry name" value="GIYc"/>
    <property type="match status" value="1"/>
</dbReference>
<dbReference type="SMART" id="SM00278">
    <property type="entry name" value="HhH1"/>
    <property type="match status" value="2"/>
</dbReference>
<dbReference type="SUPFAM" id="SSF46600">
    <property type="entry name" value="C-terminal UvrC-binding domain of UvrB"/>
    <property type="match status" value="1"/>
</dbReference>
<dbReference type="SUPFAM" id="SSF82771">
    <property type="entry name" value="GIY-YIG endonuclease"/>
    <property type="match status" value="1"/>
</dbReference>
<dbReference type="SUPFAM" id="SSF47781">
    <property type="entry name" value="RuvA domain 2-like"/>
    <property type="match status" value="1"/>
</dbReference>
<dbReference type="PROSITE" id="PS50164">
    <property type="entry name" value="GIY_YIG"/>
    <property type="match status" value="1"/>
</dbReference>
<dbReference type="PROSITE" id="PS50151">
    <property type="entry name" value="UVR"/>
    <property type="match status" value="1"/>
</dbReference>
<dbReference type="PROSITE" id="PS50165">
    <property type="entry name" value="UVRC"/>
    <property type="match status" value="1"/>
</dbReference>
<feature type="chain" id="PRO_1000099529" description="UvrABC system protein C">
    <location>
        <begin position="1"/>
        <end position="615"/>
    </location>
</feature>
<feature type="domain" description="GIY-YIG" evidence="1">
    <location>
        <begin position="12"/>
        <end position="91"/>
    </location>
</feature>
<feature type="domain" description="UVR" evidence="1">
    <location>
        <begin position="203"/>
        <end position="238"/>
    </location>
</feature>
<comment type="function">
    <text evidence="1">The UvrABC repair system catalyzes the recognition and processing of DNA lesions. UvrC both incises the 5' and 3' sides of the lesion. The N-terminal half is responsible for the 3' incision and the C-terminal half is responsible for the 5' incision.</text>
</comment>
<comment type="subunit">
    <text evidence="1">Interacts with UvrB in an incision complex.</text>
</comment>
<comment type="subcellular location">
    <subcellularLocation>
        <location evidence="1">Cytoplasm</location>
    </subcellularLocation>
</comment>
<comment type="similarity">
    <text evidence="1">Belongs to the UvrC family.</text>
</comment>
<organism>
    <name type="scientific">Thermoanaerobacter pseudethanolicus (strain ATCC 33223 / 39E)</name>
    <name type="common">Clostridium thermohydrosulfuricum</name>
    <dbReference type="NCBI Taxonomy" id="340099"/>
    <lineage>
        <taxon>Bacteria</taxon>
        <taxon>Bacillati</taxon>
        <taxon>Bacillota</taxon>
        <taxon>Clostridia</taxon>
        <taxon>Thermoanaerobacterales</taxon>
        <taxon>Thermoanaerobacteraceae</taxon>
        <taxon>Thermoanaerobacter</taxon>
    </lineage>
</organism>
<reference key="1">
    <citation type="submission" date="2008-01" db="EMBL/GenBank/DDBJ databases">
        <title>Complete sequence of Thermoanaerobacter pseudethanolicus 39E.</title>
        <authorList>
            <person name="Copeland A."/>
            <person name="Lucas S."/>
            <person name="Lapidus A."/>
            <person name="Barry K."/>
            <person name="Glavina del Rio T."/>
            <person name="Dalin E."/>
            <person name="Tice H."/>
            <person name="Pitluck S."/>
            <person name="Bruce D."/>
            <person name="Goodwin L."/>
            <person name="Saunders E."/>
            <person name="Brettin T."/>
            <person name="Detter J.C."/>
            <person name="Han C."/>
            <person name="Schmutz J."/>
            <person name="Larimer F."/>
            <person name="Land M."/>
            <person name="Hauser L."/>
            <person name="Kyrpides N."/>
            <person name="Lykidis A."/>
            <person name="Hemme C."/>
            <person name="Fields M.W."/>
            <person name="He Z."/>
            <person name="Zhou J."/>
            <person name="Richardson P."/>
        </authorList>
    </citation>
    <scope>NUCLEOTIDE SEQUENCE [LARGE SCALE GENOMIC DNA]</scope>
    <source>
        <strain>ATCC 33223 / DSM 2355 / 39E</strain>
    </source>
</reference>
<accession>B0K791</accession>
<gene>
    <name evidence="1" type="primary">uvrC</name>
    <name type="ordered locus">Teth39_0574</name>
</gene>
<keyword id="KW-0963">Cytoplasm</keyword>
<keyword id="KW-0227">DNA damage</keyword>
<keyword id="KW-0228">DNA excision</keyword>
<keyword id="KW-0234">DNA repair</keyword>
<keyword id="KW-0267">Excision nuclease</keyword>
<keyword id="KW-1185">Reference proteome</keyword>
<keyword id="KW-0742">SOS response</keyword>
<sequence length="615" mass="71186">MTIEEKLKLLPEKPGVYIMKDKSGKIIYVGKAVVLKNRVRQYFQNKEKQLPKVKVMLSHVEDFEYIVTDTELEALMLECNLIKKYKPKYNVLLKDDKNYPYIKVTVNEEYPRIMFTRRIEPDGAKYFGPYSSAFAVRETIKLVRKMFPIRTCNKNIEKDMGKVRECLYYHIGLCSAPCTNKINKEDYIKLVDQAVLFLDGKRDWLIQKLKEDMKKAAEELRFEEAARIRDQIFAIERTSEKQKVVSVGEDEQDIISMARSADISCIQVFFVRDGKLSGREHYYMKNTEGMERGEIISSFIKQFYEGAPYIPKEIITDVELDESELLSEWLSQKRGNKVFITIPVRGKKKELVDMVYQNALEALKNDISIREEISKAQVVLELSNLVGLDYAKRIEAYDISNTRGQDNVGSMVVFVDGKPKKSQYRKFNIKYVEGQDDYESMREVIERRFLHAIEEKELIEKGELEEDKAKFAEMPDLIFVDGGIGHVNAVLQVLSGLGISIPVYGMVKDSKHRTRGLVSPQGEIDIPMTSKAFRLIAQIQEEAHRFAITFHKEKQSKRFKSELLNIPGIGEKRAKALYDAFKSIEEIKRASVEDLKKVEGMNEKAAQAVYEYFRK</sequence>
<protein>
    <recommendedName>
        <fullName evidence="1">UvrABC system protein C</fullName>
        <shortName evidence="1">Protein UvrC</shortName>
    </recommendedName>
    <alternativeName>
        <fullName evidence="1">Excinuclease ABC subunit C</fullName>
    </alternativeName>
</protein>
<name>UVRC_THEP3</name>
<proteinExistence type="inferred from homology"/>